<accession>Q044I0</accession>
<proteinExistence type="inferred from homology"/>
<dbReference type="EC" id="1.5.1.5" evidence="1"/>
<dbReference type="EC" id="3.5.4.9" evidence="1"/>
<dbReference type="EMBL" id="CP000413">
    <property type="protein sequence ID" value="ABJ60142.1"/>
    <property type="molecule type" value="Genomic_DNA"/>
</dbReference>
<dbReference type="RefSeq" id="WP_003647537.1">
    <property type="nucleotide sequence ID" value="NZ_WBMG01000005.1"/>
</dbReference>
<dbReference type="SMR" id="Q044I0"/>
<dbReference type="GeneID" id="29638978"/>
<dbReference type="KEGG" id="lga:LGAS_0751"/>
<dbReference type="HOGENOM" id="CLU_034045_2_1_9"/>
<dbReference type="BioCyc" id="LGAS324831:G1G6Y-745-MONOMER"/>
<dbReference type="UniPathway" id="UPA00193"/>
<dbReference type="Proteomes" id="UP000000664">
    <property type="component" value="Chromosome"/>
</dbReference>
<dbReference type="GO" id="GO:0005829">
    <property type="term" value="C:cytosol"/>
    <property type="evidence" value="ECO:0007669"/>
    <property type="project" value="TreeGrafter"/>
</dbReference>
<dbReference type="GO" id="GO:0004477">
    <property type="term" value="F:methenyltetrahydrofolate cyclohydrolase activity"/>
    <property type="evidence" value="ECO:0007669"/>
    <property type="project" value="UniProtKB-UniRule"/>
</dbReference>
<dbReference type="GO" id="GO:0004488">
    <property type="term" value="F:methylenetetrahydrofolate dehydrogenase (NADP+) activity"/>
    <property type="evidence" value="ECO:0007669"/>
    <property type="project" value="UniProtKB-UniRule"/>
</dbReference>
<dbReference type="GO" id="GO:0000105">
    <property type="term" value="P:L-histidine biosynthetic process"/>
    <property type="evidence" value="ECO:0007669"/>
    <property type="project" value="UniProtKB-KW"/>
</dbReference>
<dbReference type="GO" id="GO:0009086">
    <property type="term" value="P:methionine biosynthetic process"/>
    <property type="evidence" value="ECO:0007669"/>
    <property type="project" value="UniProtKB-KW"/>
</dbReference>
<dbReference type="GO" id="GO:0006164">
    <property type="term" value="P:purine nucleotide biosynthetic process"/>
    <property type="evidence" value="ECO:0007669"/>
    <property type="project" value="UniProtKB-KW"/>
</dbReference>
<dbReference type="GO" id="GO:0035999">
    <property type="term" value="P:tetrahydrofolate interconversion"/>
    <property type="evidence" value="ECO:0007669"/>
    <property type="project" value="UniProtKB-UniRule"/>
</dbReference>
<dbReference type="CDD" id="cd01080">
    <property type="entry name" value="NAD_bind_m-THF_DH_Cyclohyd"/>
    <property type="match status" value="1"/>
</dbReference>
<dbReference type="FunFam" id="3.40.50.720:FF:000094">
    <property type="entry name" value="Bifunctional protein FolD"/>
    <property type="match status" value="1"/>
</dbReference>
<dbReference type="FunFam" id="3.40.50.10860:FF:000005">
    <property type="entry name" value="C-1-tetrahydrofolate synthase, cytoplasmic, putative"/>
    <property type="match status" value="1"/>
</dbReference>
<dbReference type="Gene3D" id="3.40.50.10860">
    <property type="entry name" value="Leucine Dehydrogenase, chain A, domain 1"/>
    <property type="match status" value="1"/>
</dbReference>
<dbReference type="Gene3D" id="3.40.50.720">
    <property type="entry name" value="NAD(P)-binding Rossmann-like Domain"/>
    <property type="match status" value="1"/>
</dbReference>
<dbReference type="HAMAP" id="MF_01576">
    <property type="entry name" value="THF_DHG_CYH"/>
    <property type="match status" value="1"/>
</dbReference>
<dbReference type="InterPro" id="IPR046346">
    <property type="entry name" value="Aminoacid_DH-like_N_sf"/>
</dbReference>
<dbReference type="InterPro" id="IPR036291">
    <property type="entry name" value="NAD(P)-bd_dom_sf"/>
</dbReference>
<dbReference type="InterPro" id="IPR000672">
    <property type="entry name" value="THF_DH/CycHdrlase"/>
</dbReference>
<dbReference type="InterPro" id="IPR020630">
    <property type="entry name" value="THF_DH/CycHdrlase_cat_dom"/>
</dbReference>
<dbReference type="InterPro" id="IPR020867">
    <property type="entry name" value="THF_DH/CycHdrlase_CS"/>
</dbReference>
<dbReference type="InterPro" id="IPR020631">
    <property type="entry name" value="THF_DH/CycHdrlase_NAD-bd_dom"/>
</dbReference>
<dbReference type="PANTHER" id="PTHR48099:SF5">
    <property type="entry name" value="C-1-TETRAHYDROFOLATE SYNTHASE, CYTOPLASMIC"/>
    <property type="match status" value="1"/>
</dbReference>
<dbReference type="PANTHER" id="PTHR48099">
    <property type="entry name" value="C-1-TETRAHYDROFOLATE SYNTHASE, CYTOPLASMIC-RELATED"/>
    <property type="match status" value="1"/>
</dbReference>
<dbReference type="Pfam" id="PF00763">
    <property type="entry name" value="THF_DHG_CYH"/>
    <property type="match status" value="1"/>
</dbReference>
<dbReference type="Pfam" id="PF02882">
    <property type="entry name" value="THF_DHG_CYH_C"/>
    <property type="match status" value="1"/>
</dbReference>
<dbReference type="PRINTS" id="PR00085">
    <property type="entry name" value="THFDHDRGNASE"/>
</dbReference>
<dbReference type="SUPFAM" id="SSF53223">
    <property type="entry name" value="Aminoacid dehydrogenase-like, N-terminal domain"/>
    <property type="match status" value="1"/>
</dbReference>
<dbReference type="SUPFAM" id="SSF51735">
    <property type="entry name" value="NAD(P)-binding Rossmann-fold domains"/>
    <property type="match status" value="1"/>
</dbReference>
<dbReference type="PROSITE" id="PS00766">
    <property type="entry name" value="THF_DHG_CYH_1"/>
    <property type="match status" value="1"/>
</dbReference>
<gene>
    <name evidence="1" type="primary">folD</name>
    <name type="ordered locus">LGAS_0751</name>
</gene>
<evidence type="ECO:0000255" key="1">
    <source>
        <dbReference type="HAMAP-Rule" id="MF_01576"/>
    </source>
</evidence>
<keyword id="KW-0028">Amino-acid biosynthesis</keyword>
<keyword id="KW-0368">Histidine biosynthesis</keyword>
<keyword id="KW-0378">Hydrolase</keyword>
<keyword id="KW-0486">Methionine biosynthesis</keyword>
<keyword id="KW-0511">Multifunctional enzyme</keyword>
<keyword id="KW-0521">NADP</keyword>
<keyword id="KW-0554">One-carbon metabolism</keyword>
<keyword id="KW-0560">Oxidoreductase</keyword>
<keyword id="KW-0658">Purine biosynthesis</keyword>
<reference key="1">
    <citation type="journal article" date="2006" name="Proc. Natl. Acad. Sci. U.S.A.">
        <title>Comparative genomics of the lactic acid bacteria.</title>
        <authorList>
            <person name="Makarova K.S."/>
            <person name="Slesarev A."/>
            <person name="Wolf Y.I."/>
            <person name="Sorokin A."/>
            <person name="Mirkin B."/>
            <person name="Koonin E.V."/>
            <person name="Pavlov A."/>
            <person name="Pavlova N."/>
            <person name="Karamychev V."/>
            <person name="Polouchine N."/>
            <person name="Shakhova V."/>
            <person name="Grigoriev I."/>
            <person name="Lou Y."/>
            <person name="Rohksar D."/>
            <person name="Lucas S."/>
            <person name="Huang K."/>
            <person name="Goodstein D.M."/>
            <person name="Hawkins T."/>
            <person name="Plengvidhya V."/>
            <person name="Welker D."/>
            <person name="Hughes J."/>
            <person name="Goh Y."/>
            <person name="Benson A."/>
            <person name="Baldwin K."/>
            <person name="Lee J.-H."/>
            <person name="Diaz-Muniz I."/>
            <person name="Dosti B."/>
            <person name="Smeianov V."/>
            <person name="Wechter W."/>
            <person name="Barabote R."/>
            <person name="Lorca G."/>
            <person name="Altermann E."/>
            <person name="Barrangou R."/>
            <person name="Ganesan B."/>
            <person name="Xie Y."/>
            <person name="Rawsthorne H."/>
            <person name="Tamir D."/>
            <person name="Parker C."/>
            <person name="Breidt F."/>
            <person name="Broadbent J.R."/>
            <person name="Hutkins R."/>
            <person name="O'Sullivan D."/>
            <person name="Steele J."/>
            <person name="Unlu G."/>
            <person name="Saier M.H. Jr."/>
            <person name="Klaenhammer T."/>
            <person name="Richardson P."/>
            <person name="Kozyavkin S."/>
            <person name="Weimer B.C."/>
            <person name="Mills D.A."/>
        </authorList>
    </citation>
    <scope>NUCLEOTIDE SEQUENCE [LARGE SCALE GENOMIC DNA]</scope>
    <source>
        <strain>ATCC 33323 / DSM 20243 / BCRC 14619 / CIP 102991 / JCM 1131 / KCTC 3163 / NCIMB 11718 / NCTC 13722 / AM63</strain>
    </source>
</reference>
<name>FOLD_LACGA</name>
<organism>
    <name type="scientific">Lactobacillus gasseri (strain ATCC 33323 / DSM 20243 / BCRC 14619 / CIP 102991 / JCM 1131 / KCTC 3163 / NCIMB 11718 / NCTC 13722 / AM63)</name>
    <dbReference type="NCBI Taxonomy" id="324831"/>
    <lineage>
        <taxon>Bacteria</taxon>
        <taxon>Bacillati</taxon>
        <taxon>Bacillota</taxon>
        <taxon>Bacilli</taxon>
        <taxon>Lactobacillales</taxon>
        <taxon>Lactobacillaceae</taxon>
        <taxon>Lactobacillus</taxon>
    </lineage>
</organism>
<sequence length="282" mass="30410">MKKLLEGKTPANEITENLKKEIKNLKNDGINPTLCVIEVGDDPASKIYLRVKRNLAKKVGINEVGLHFPADTSQAELLGKIKELNQDPNINGIMVQLPVPPQIDPRAIFETIAPEKDADGFSPLNLGRLWEGQSDIIPATVRSILTLIDYYGIKMAGKNTVIIGRSVIVGKPLAAVLLERDATVTIAHSKTKNLADLTRNADVIISDVGKAHLVTEDMVKDGAVLIDVGMNRENGKLMGDVDFDTVAPKANAITPVPGGVGPLTVASLMKQAVILTRKQHGR</sequence>
<comment type="function">
    <text evidence="1">Catalyzes the oxidation of 5,10-methylenetetrahydrofolate to 5,10-methenyltetrahydrofolate and then the hydrolysis of 5,10-methenyltetrahydrofolate to 10-formyltetrahydrofolate.</text>
</comment>
<comment type="catalytic activity">
    <reaction evidence="1">
        <text>(6R)-5,10-methylene-5,6,7,8-tetrahydrofolate + NADP(+) = (6R)-5,10-methenyltetrahydrofolate + NADPH</text>
        <dbReference type="Rhea" id="RHEA:22812"/>
        <dbReference type="ChEBI" id="CHEBI:15636"/>
        <dbReference type="ChEBI" id="CHEBI:57455"/>
        <dbReference type="ChEBI" id="CHEBI:57783"/>
        <dbReference type="ChEBI" id="CHEBI:58349"/>
        <dbReference type="EC" id="1.5.1.5"/>
    </reaction>
</comment>
<comment type="catalytic activity">
    <reaction evidence="1">
        <text>(6R)-5,10-methenyltetrahydrofolate + H2O = (6R)-10-formyltetrahydrofolate + H(+)</text>
        <dbReference type="Rhea" id="RHEA:23700"/>
        <dbReference type="ChEBI" id="CHEBI:15377"/>
        <dbReference type="ChEBI" id="CHEBI:15378"/>
        <dbReference type="ChEBI" id="CHEBI:57455"/>
        <dbReference type="ChEBI" id="CHEBI:195366"/>
        <dbReference type="EC" id="3.5.4.9"/>
    </reaction>
</comment>
<comment type="pathway">
    <text evidence="1">One-carbon metabolism; tetrahydrofolate interconversion.</text>
</comment>
<comment type="subunit">
    <text evidence="1">Homodimer.</text>
</comment>
<comment type="similarity">
    <text evidence="1">Belongs to the tetrahydrofolate dehydrogenase/cyclohydrolase family.</text>
</comment>
<protein>
    <recommendedName>
        <fullName evidence="1">Bifunctional protein FolD</fullName>
    </recommendedName>
    <domain>
        <recommendedName>
            <fullName evidence="1">Methylenetetrahydrofolate dehydrogenase</fullName>
            <ecNumber evidence="1">1.5.1.5</ecNumber>
        </recommendedName>
    </domain>
    <domain>
        <recommendedName>
            <fullName evidence="1">Methenyltetrahydrofolate cyclohydrolase</fullName>
            <ecNumber evidence="1">3.5.4.9</ecNumber>
        </recommendedName>
    </domain>
</protein>
<feature type="chain" id="PRO_0000305831" description="Bifunctional protein FolD">
    <location>
        <begin position="1"/>
        <end position="282"/>
    </location>
</feature>
<feature type="binding site" evidence="1">
    <location>
        <begin position="164"/>
        <end position="166"/>
    </location>
    <ligand>
        <name>NADP(+)</name>
        <dbReference type="ChEBI" id="CHEBI:58349"/>
    </ligand>
</feature>
<feature type="binding site" evidence="1">
    <location>
        <position position="189"/>
    </location>
    <ligand>
        <name>NADP(+)</name>
        <dbReference type="ChEBI" id="CHEBI:58349"/>
    </ligand>
</feature>